<comment type="function">
    <text evidence="8 9 10 11 12 13 15 18 19 20 22 23 26">Involved in several stages of intracellular trafficking. Interacts with membranes containing phosphatidylinositol 3-phosphate (PtdIns(3P)) or phosphatidylinositol 3,5-bisphosphate (PtdIns(3,5)P2) (PubMed:12198132). Acts in part as component of the retromer membrane-deforming SNX-BAR subcomplex. The SNX-BAR retromer mediates retrograde transport of cargo proteins from endosomes to the trans-Golgi network (TGN) and is involved in endosome-to-plasma membrane transport for cargo protein recycling. The SNX-BAR subcomplex functions to deform the donor membrane into a tubular profile called endosome-to-TGN transport carrier (ETC) (Probable). Can sense membrane curvature and has in vitro vesicle-to-membrane remodeling activity (PubMed:19816406, PubMed:23085988). Involved in retrograde endosome-to-TGN transport of lysosomal enzyme receptors (IGF2R, M6PR and SORT1) and Shiginella dysenteria toxin stxB. Plays a role in targeting ligand-activated EGFR to the lysosomes for degradation after endocytosis from the cell surface and release from the Golgi (PubMed:12198132, PubMed:15498486, PubMed:17101778, PubMed:17550970, PubMed:18088323, PubMed:21040701). Involvement in retromer-independent endocytic trafficking of P2RY1 and lysosomal degradation of protease-activated receptor-1/F2R (PubMed:16407403, PubMed:20070609). Promotes KALRN- and RHOG-dependent but retromer-independent membrane remodeling such as lamellipodium formation; the function is dependent on GEF activity of KALRN (PubMed:20604901). Required for endocytosis of DRD5 upon agonist stimulation but not for basal receptor trafficking (PubMed:23152498).</text>
</comment>
<comment type="subunit">
    <text evidence="2 3 6 7 8 9 11 14 16 17 19 22 23 24 27 29">Predominantly forms heterodimers with BAR domain-containing sorting nexins SNX5, SNX6 and SNX32; can self-associate to form homodimers (PubMed:23085988). The heterodimers are proposed to self-assemble into helical arrays on the membrane to stabilize and expand local membrane curvature underlying endosomal tubule formation. Thought to be a component of the originally described retromer complex (also called SNX-BAR retromer) which is a pentamer containing the heterotrimeric retromer cargo-selective complex (CSC), also described as vacuolar protein sorting subcomplex (VPS) and a heterodimeric membrane-deforming subcomplex formed between SNX1 or SNX2 and SNX5 or SNX6 (also called SNX-BAR subcomplex); the respective CSC and SNX-BAR subcomplexes associate with low affinity (Probable). Interacts with SNX5, SNX6, SNX32, VPS26A, VPS29, VPS35, DRD5, DENND5A, KALRN, RHOG (GDP-bound form) (PubMed:11102511, PubMed:19619496, PubMed:19935774, PubMed:20604901, PubMed:23085988, PubMed:23152498, PubMed:9819414). The interaction with SNX2 is reported controversially (PubMed:11997453, PubMed:19619496, PubMed:23085988, PubMed:9819414). Interacts with DNAJC13; prevented by presence of HGS (PubMed:19874558). Interacts with HGS (By similarity).</text>
</comment>
<comment type="interaction">
    <interactant intactId="EBI-2822329">
        <id>Q13596</id>
    </interactant>
    <interactant intactId="EBI-741181">
        <id>Q6RW13</id>
        <label>AGTRAP</label>
    </interactant>
    <organismsDiffer>false</organismsDiffer>
    <experiments>3</experiments>
</comment>
<comment type="interaction">
    <interactant intactId="EBI-2822329">
        <id>Q13596</id>
    </interactant>
    <interactant intactId="EBI-714543">
        <id>Q15041</id>
        <label>ARL6IP1</label>
    </interactant>
    <organismsDiffer>false</organismsDiffer>
    <experiments>4</experiments>
</comment>
<comment type="interaction">
    <interactant intactId="EBI-2822329">
        <id>Q13596</id>
    </interactant>
    <interactant intactId="EBI-36513937">
        <id>Q5T9G4-2</id>
        <label>ARMC12</label>
    </interactant>
    <organismsDiffer>false</organismsDiffer>
    <experiments>3</experiments>
</comment>
<comment type="interaction">
    <interactant intactId="EBI-2822329">
        <id>Q13596</id>
    </interactant>
    <interactant intactId="EBI-11979451">
        <id>P07510-2</id>
        <label>CHRNG</label>
    </interactant>
    <organismsDiffer>false</organismsDiffer>
    <experiments>3</experiments>
</comment>
<comment type="interaction">
    <interactant intactId="EBI-2822329">
        <id>Q13596</id>
    </interactant>
    <interactant intactId="EBI-17278014">
        <id>Q8IZR5-2</id>
        <label>CMTM4</label>
    </interactant>
    <organismsDiffer>false</organismsDiffer>
    <experiments>3</experiments>
</comment>
<comment type="interaction">
    <interactant intactId="EBI-2822329">
        <id>Q13596</id>
    </interactant>
    <interactant intactId="EBI-2548702">
        <id>Q96DZ9</id>
        <label>CMTM5</label>
    </interactant>
    <organismsDiffer>false</organismsDiffer>
    <experiments>3</experiments>
</comment>
<comment type="interaction">
    <interactant intactId="EBI-2822329">
        <id>Q13596</id>
    </interactant>
    <interactant intactId="EBI-11522780">
        <id>Q96DZ9-2</id>
        <label>CMTM5</label>
    </interactant>
    <organismsDiffer>false</organismsDiffer>
    <experiments>3</experiments>
</comment>
<comment type="interaction">
    <interactant intactId="EBI-2822329">
        <id>Q13596</id>
    </interactant>
    <interactant intactId="EBI-10897372">
        <id>Q9NZJ6</id>
        <label>COQ3</label>
    </interactant>
    <organismsDiffer>false</organismsDiffer>
    <experiments>3</experiments>
</comment>
<comment type="interaction">
    <interactant intactId="EBI-2822329">
        <id>Q13596</id>
    </interactant>
    <interactant intactId="EBI-14240149">
        <id>B3EWG3</id>
        <label>FAM25A</label>
    </interactant>
    <organismsDiffer>false</organismsDiffer>
    <experiments>3</experiments>
</comment>
<comment type="interaction">
    <interactant intactId="EBI-2822329">
        <id>Q13596</id>
    </interactant>
    <interactant intactId="EBI-3918971">
        <id>Q9Y680</id>
        <label>FKBP7</label>
    </interactant>
    <organismsDiffer>false</organismsDiffer>
    <experiments>3</experiments>
</comment>
<comment type="interaction">
    <interactant intactId="EBI-2822329">
        <id>Q13596</id>
    </interactant>
    <interactant intactId="EBI-3059266">
        <id>Q8IVP5</id>
        <label>FUNDC1</label>
    </interactant>
    <organismsDiffer>false</organismsDiffer>
    <experiments>3</experiments>
</comment>
<comment type="interaction">
    <interactant intactId="EBI-2822329">
        <id>Q13596</id>
    </interactant>
    <interactant intactId="EBI-10763431">
        <id>P53701</id>
        <label>HCCS</label>
    </interactant>
    <organismsDiffer>false</organismsDiffer>
    <experiments>3</experiments>
</comment>
<comment type="interaction">
    <interactant intactId="EBI-2822329">
        <id>Q13596</id>
    </interactant>
    <interactant intactId="EBI-2830566">
        <id>Q9H400</id>
        <label>LIME1</label>
    </interactant>
    <organismsDiffer>false</organismsDiffer>
    <experiments>3</experiments>
</comment>
<comment type="interaction">
    <interactant intactId="EBI-2822329">
        <id>Q13596</id>
    </interactant>
    <interactant intactId="EBI-719403">
        <id>O95563</id>
        <label>MPC2</label>
    </interactant>
    <organismsDiffer>false</organismsDiffer>
    <experiments>3</experiments>
</comment>
<comment type="interaction">
    <interactant intactId="EBI-2822329">
        <id>Q13596</id>
    </interactant>
    <interactant intactId="EBI-725795">
        <id>O60664</id>
        <label>PLIN3</label>
    </interactant>
    <organismsDiffer>false</organismsDiffer>
    <experiments>4</experiments>
</comment>
<comment type="interaction">
    <interactant intactId="EBI-2822329">
        <id>Q13596</id>
    </interactant>
    <interactant intactId="EBI-712367">
        <id>Q9UI14</id>
        <label>RABAC1</label>
    </interactant>
    <organismsDiffer>false</organismsDiffer>
    <experiments>3</experiments>
</comment>
<comment type="interaction">
    <interactant intactId="EBI-2822329">
        <id>Q13596</id>
    </interactant>
    <interactant intactId="EBI-1549827">
        <id>Q00765</id>
        <label>REEP5</label>
    </interactant>
    <organismsDiffer>false</organismsDiffer>
    <experiments>3</experiments>
</comment>
<comment type="interaction">
    <interactant intactId="EBI-2822329">
        <id>Q13596</id>
    </interactant>
    <interactant intactId="EBI-750345">
        <id>Q96HR9</id>
        <label>REEP6</label>
    </interactant>
    <organismsDiffer>false</organismsDiffer>
    <experiments>4</experiments>
</comment>
<comment type="interaction">
    <interactant intactId="EBI-2822329">
        <id>Q13596</id>
    </interactant>
    <interactant intactId="EBI-14065960">
        <id>Q96HR9-2</id>
        <label>REEP6</label>
    </interactant>
    <organismsDiffer>false</organismsDiffer>
    <experiments>3</experiments>
</comment>
<comment type="interaction">
    <interactant intactId="EBI-2822329">
        <id>Q13596</id>
    </interactant>
    <interactant intactId="EBI-18304046">
        <id>Q6ZWK4</id>
        <label>RHEX</label>
    </interactant>
    <organismsDiffer>false</organismsDiffer>
    <experiments>3</experiments>
</comment>
<comment type="interaction">
    <interactant intactId="EBI-2822329">
        <id>Q13596</id>
    </interactant>
    <interactant intactId="EBI-740467">
        <id>O95197</id>
        <label>RTN3</label>
    </interactant>
    <organismsDiffer>false</organismsDiffer>
    <experiments>3</experiments>
</comment>
<comment type="interaction">
    <interactant intactId="EBI-2822329">
        <id>Q13596</id>
    </interactant>
    <interactant intactId="EBI-715945">
        <id>Q9NQC3</id>
        <label>RTN4</label>
    </interactant>
    <organismsDiffer>false</organismsDiffer>
    <experiments>3</experiments>
</comment>
<comment type="interaction">
    <interactant intactId="EBI-2822329">
        <id>Q13596</id>
    </interactant>
    <interactant intactId="EBI-727004">
        <id>O00560</id>
        <label>SDCBP</label>
    </interactant>
    <organismsDiffer>false</organismsDiffer>
    <experiments>3</experiments>
</comment>
<comment type="interaction">
    <interactant intactId="EBI-2822329">
        <id>Q13596</id>
    </interactant>
    <interactant intactId="EBI-3923480">
        <id>Q8N3Y7</id>
        <label>SDR16C5</label>
    </interactant>
    <organismsDiffer>false</organismsDiffer>
    <experiments>3</experiments>
</comment>
<comment type="interaction">
    <interactant intactId="EBI-2822329">
        <id>Q13596</id>
    </interactant>
    <interactant intactId="EBI-2854842">
        <id>Q8WV19</id>
        <label>SFT2D1</label>
    </interactant>
    <organismsDiffer>false</organismsDiffer>
    <experiments>3</experiments>
</comment>
<comment type="interaction">
    <interactant intactId="EBI-2822329">
        <id>Q13596</id>
    </interactant>
    <interactant intactId="EBI-2623095">
        <id>Q9Y371</id>
        <label>SH3GLB1</label>
    </interactant>
    <organismsDiffer>false</organismsDiffer>
    <experiments>3</experiments>
</comment>
<comment type="interaction">
    <interactant intactId="EBI-2822329">
        <id>Q13596</id>
    </interactant>
    <interactant intactId="EBI-2822329">
        <id>Q13596</id>
        <label>SNX1</label>
    </interactant>
    <organismsDiffer>false</organismsDiffer>
    <experiments>2</experiments>
</comment>
<comment type="interaction">
    <interactant intactId="EBI-2822329">
        <id>Q13596</id>
    </interactant>
    <interactant intactId="EBI-1046690">
        <id>O60749</id>
        <label>SNX2</label>
    </interactant>
    <organismsDiffer>false</organismsDiffer>
    <experiments>6</experiments>
</comment>
<comment type="interaction">
    <interactant intactId="EBI-2822329">
        <id>Q13596</id>
    </interactant>
    <interactant intactId="EBI-8099743">
        <id>Q86XE0</id>
        <label>SNX32</label>
    </interactant>
    <organismsDiffer>false</organismsDiffer>
    <experiments>13</experiments>
</comment>
<comment type="interaction">
    <interactant intactId="EBI-2822329">
        <id>Q13596</id>
    </interactant>
    <interactant intactId="EBI-715760">
        <id>Q9Y5X3</id>
        <label>SNX5</label>
    </interactant>
    <organismsDiffer>false</organismsDiffer>
    <experiments>5</experiments>
</comment>
<comment type="interaction">
    <interactant intactId="EBI-2822329">
        <id>Q13596</id>
    </interactant>
    <interactant intactId="EBI-949294">
        <id>Q9UNH7</id>
        <label>SNX6</label>
    </interactant>
    <organismsDiffer>false</organismsDiffer>
    <experiments>10</experiments>
</comment>
<comment type="interaction">
    <interactant intactId="EBI-2822329">
        <id>Q13596</id>
    </interactant>
    <interactant intactId="EBI-17197485">
        <id>Q9NS25</id>
        <label>SPANXB1</label>
    </interactant>
    <organismsDiffer>false</organismsDiffer>
    <experiments>2</experiments>
</comment>
<comment type="interaction">
    <interactant intactId="EBI-2822329">
        <id>Q13596</id>
    </interactant>
    <interactant intactId="EBI-12187159">
        <id>O43759-2</id>
        <label>SYNGR1</label>
    </interactant>
    <organismsDiffer>false</organismsDiffer>
    <experiments>3</experiments>
</comment>
<comment type="interaction">
    <interactant intactId="EBI-2822329">
        <id>Q13596</id>
    </interactant>
    <interactant intactId="EBI-9071725">
        <id>P08247</id>
        <label>SYP</label>
    </interactant>
    <organismsDiffer>false</organismsDiffer>
    <experiments>3</experiments>
</comment>
<comment type="interaction">
    <interactant intactId="EBI-2822329">
        <id>Q13596</id>
    </interactant>
    <interactant intactId="EBI-11528917">
        <id>Q8WW34-2</id>
        <label>TMEM239</label>
    </interactant>
    <organismsDiffer>false</organismsDiffer>
    <experiments>3</experiments>
</comment>
<comment type="interaction">
    <interactant intactId="EBI-2822329">
        <id>Q13596</id>
    </interactant>
    <interactant intactId="EBI-1054634">
        <id>Q96QK1</id>
        <label>VPS35</label>
    </interactant>
    <organismsDiffer>false</organismsDiffer>
    <experiments>2</experiments>
</comment>
<comment type="interaction">
    <interactant intactId="EBI-2822329">
        <id>Q13596</id>
    </interactant>
    <interactant intactId="EBI-2563794">
        <id>Q12768</id>
        <label>WASHC5</label>
    </interactant>
    <organismsDiffer>false</organismsDiffer>
    <experiments>2</experiments>
</comment>
<comment type="subcellular location">
    <subcellularLocation>
        <location evidence="9 13 21">Endosome membrane</location>
        <topology>Peripheral membrane protein</topology>
        <orientation>Cytoplasmic side</orientation>
    </subcellularLocation>
    <subcellularLocation>
        <location evidence="30">Golgi apparatus</location>
        <location evidence="30">trans-Golgi network membrane</location>
        <topology evidence="30">Peripheral membrane protein</topology>
        <orientation evidence="30">Cytoplasmic side</orientation>
    </subcellularLocation>
    <subcellularLocation>
        <location>Early endosome membrane</location>
        <topology>Peripheral membrane protein</topology>
        <orientation>Cytoplasmic side</orientation>
    </subcellularLocation>
    <subcellularLocation>
        <location evidence="19">Cell projection</location>
        <location evidence="19">Lamellipodium</location>
    </subcellularLocation>
    <text evidence="9 13 19">Enriched on tubular elements of the early endosome membrane. Binds preferentially to highly curved membranes enriched in phosphatidylinositol 3-phosphate (PtdIns(3P)) or phosphatidylinositol 3,5-bisphosphate (PtdIns(3,5)P2) (PubMed:15498486). Colocalized with SORT1 to tubular endosomal membrane structures called endosome-to-TGN transport carriers (ETCs) which are budding from early endosome vacuoles just before maturing into late endosome vacuoles (PubMed:18088323). Colocalizes with DNAJC13 and Shiginella dysenteria toxin stxB on early endosomes (PubMed:19874558). Colocalized with F-actin at the leading edge of lamellipodia in a KALRN-dependent manner (PubMed:20604901).</text>
</comment>
<comment type="alternative products">
    <event type="alternative splicing"/>
    <isoform>
        <id>Q13596-1</id>
        <name>1</name>
        <sequence type="displayed"/>
    </isoform>
    <isoform>
        <id>Q13596-2</id>
        <name>1A</name>
        <sequence type="described" ref="VSP_006189"/>
    </isoform>
    <isoform>
        <id>Q13596-3</id>
        <name>3</name>
        <sequence type="described" ref="VSP_044823"/>
    </isoform>
</comment>
<comment type="domain">
    <text evidence="15 29">The BAR domain is able to sense membrane curvature upon dimerization (PubMed:19816406). Membrane remodeling seems to implicate insertion of a N-terminal amphipathic helix (AH) in the membrane (Probable).</text>
</comment>
<comment type="miscellaneous">
    <text>Binds phosphatidylinositol 3-phosphate (PtdIns-(3)P) and phosphatidylinositol 3,5-bisphosphate (PtdIns-(3,5)P2) in liposome-based assays. Can bind PtdIns(3,4,5)P3 in protein:lipid overlay assays, but not in liposome-based assays.</text>
</comment>
<comment type="similarity">
    <text evidence="30">Belongs to the sorting nexin family.</text>
</comment>
<protein>
    <recommendedName>
        <fullName>Sorting nexin-1</fullName>
    </recommendedName>
</protein>
<sequence>MASGGGGCSASERLPPPFPGLEPESEGAAGGSEPEAGDSDTEGEDIFTGAAVVSKHQSPKITTSLLPINNGSKENGIHEEQDQEPQDLFADATVELSLDSTQNNQKKVLAKTLISLPPQEATNSSKPQPTYEELEEEEQEDQFDLTVGITDPEKIGDGMNAYVAYKVTTQTSLPLFRSKQFAVKRRFSDFLGLYEKLSEKHSQNGFIVPPPPEKSLIGMTKVKVGKEDSSSAEFLEKRRAALERYLQRIVNHPTMLQDPDVREFLEKEELPRAVGTQTLSGAGLLKMFNKATDAVSKMTIKMNESDIWFEEKLQEVECEEQRLRKLHAVVETLVNHRKELALNTAQFAKSLAMLGSSEDNTALSRALSQLAEVEEKIEQLHQEQANNDFFLLAELLSDYIRLLAIVRAAFDQRMKTWQRWQDAQATLQKKREAEARLLWANKPDKLQQAKDEILEWESRVTQYERDFERISTVVRKEVIRFEKEKSKDFKNHVIKYLETLLYSQQQLAKYWEAFLPEAKAIS</sequence>
<gene>
    <name type="primary">SNX1</name>
</gene>
<reference key="1">
    <citation type="journal article" date="1996" name="Science">
        <title>Enhanced degradation of EGF receptors by a sorting nexin, SNX1.</title>
        <authorList>
            <person name="Kurten R.C."/>
            <person name="Cadena D.L."/>
            <person name="Gill G.N."/>
        </authorList>
    </citation>
    <scope>NUCLEOTIDE SEQUENCE [MRNA]</scope>
</reference>
<reference key="2">
    <citation type="journal article" date="1998" name="Mol. Cell. Biol.">
        <title>Identification of a family of sorting nexin molecules and characterization of their association with receptors.</title>
        <authorList>
            <person name="Haft C.R."/>
            <person name="de la Luz Sierra M."/>
            <person name="Barr V.A."/>
            <person name="Haft D.H."/>
            <person name="Taylor S.I."/>
        </authorList>
    </citation>
    <scope>NUCLEOTIDE SEQUENCE [MRNA]</scope>
    <scope>ALTERNATIVE SPLICING</scope>
    <scope>INTERACTION WITH VPS26A; VPS29; VPS35 AND SNX2</scope>
</reference>
<reference key="3">
    <citation type="submission" date="2003-05" db="EMBL/GenBank/DDBJ databases">
        <title>Cloning of human full-length CDSs in BD Creator(TM) system donor vector.</title>
        <authorList>
            <person name="Kalnine N."/>
            <person name="Chen X."/>
            <person name="Rolfs A."/>
            <person name="Halleck A."/>
            <person name="Hines L."/>
            <person name="Eisenstein S."/>
            <person name="Koundinya M."/>
            <person name="Raphael J."/>
            <person name="Moreira D."/>
            <person name="Kelley T."/>
            <person name="LaBaer J."/>
            <person name="Lin Y."/>
            <person name="Phelan M."/>
            <person name="Farmer A."/>
        </authorList>
    </citation>
    <scope>NUCLEOTIDE SEQUENCE [LARGE SCALE MRNA]</scope>
</reference>
<reference key="4">
    <citation type="journal article" date="2004" name="Nat. Genet.">
        <title>Complete sequencing and characterization of 21,243 full-length human cDNAs.</title>
        <authorList>
            <person name="Ota T."/>
            <person name="Suzuki Y."/>
            <person name="Nishikawa T."/>
            <person name="Otsuki T."/>
            <person name="Sugiyama T."/>
            <person name="Irie R."/>
            <person name="Wakamatsu A."/>
            <person name="Hayashi K."/>
            <person name="Sato H."/>
            <person name="Nagai K."/>
            <person name="Kimura K."/>
            <person name="Makita H."/>
            <person name="Sekine M."/>
            <person name="Obayashi M."/>
            <person name="Nishi T."/>
            <person name="Shibahara T."/>
            <person name="Tanaka T."/>
            <person name="Ishii S."/>
            <person name="Yamamoto J."/>
            <person name="Saito K."/>
            <person name="Kawai Y."/>
            <person name="Isono Y."/>
            <person name="Nakamura Y."/>
            <person name="Nagahari K."/>
            <person name="Murakami K."/>
            <person name="Yasuda T."/>
            <person name="Iwayanagi T."/>
            <person name="Wagatsuma M."/>
            <person name="Shiratori A."/>
            <person name="Sudo H."/>
            <person name="Hosoiri T."/>
            <person name="Kaku Y."/>
            <person name="Kodaira H."/>
            <person name="Kondo H."/>
            <person name="Sugawara M."/>
            <person name="Takahashi M."/>
            <person name="Kanda K."/>
            <person name="Yokoi T."/>
            <person name="Furuya T."/>
            <person name="Kikkawa E."/>
            <person name="Omura Y."/>
            <person name="Abe K."/>
            <person name="Kamihara K."/>
            <person name="Katsuta N."/>
            <person name="Sato K."/>
            <person name="Tanikawa M."/>
            <person name="Yamazaki M."/>
            <person name="Ninomiya K."/>
            <person name="Ishibashi T."/>
            <person name="Yamashita H."/>
            <person name="Murakawa K."/>
            <person name="Fujimori K."/>
            <person name="Tanai H."/>
            <person name="Kimata M."/>
            <person name="Watanabe M."/>
            <person name="Hiraoka S."/>
            <person name="Chiba Y."/>
            <person name="Ishida S."/>
            <person name="Ono Y."/>
            <person name="Takiguchi S."/>
            <person name="Watanabe S."/>
            <person name="Yosida M."/>
            <person name="Hotuta T."/>
            <person name="Kusano J."/>
            <person name="Kanehori K."/>
            <person name="Takahashi-Fujii A."/>
            <person name="Hara H."/>
            <person name="Tanase T.-O."/>
            <person name="Nomura Y."/>
            <person name="Togiya S."/>
            <person name="Komai F."/>
            <person name="Hara R."/>
            <person name="Takeuchi K."/>
            <person name="Arita M."/>
            <person name="Imose N."/>
            <person name="Musashino K."/>
            <person name="Yuuki H."/>
            <person name="Oshima A."/>
            <person name="Sasaki N."/>
            <person name="Aotsuka S."/>
            <person name="Yoshikawa Y."/>
            <person name="Matsunawa H."/>
            <person name="Ichihara T."/>
            <person name="Shiohata N."/>
            <person name="Sano S."/>
            <person name="Moriya S."/>
            <person name="Momiyama H."/>
            <person name="Satoh N."/>
            <person name="Takami S."/>
            <person name="Terashima Y."/>
            <person name="Suzuki O."/>
            <person name="Nakagawa S."/>
            <person name="Senoh A."/>
            <person name="Mizoguchi H."/>
            <person name="Goto Y."/>
            <person name="Shimizu F."/>
            <person name="Wakebe H."/>
            <person name="Hishigaki H."/>
            <person name="Watanabe T."/>
            <person name="Sugiyama A."/>
            <person name="Takemoto M."/>
            <person name="Kawakami B."/>
            <person name="Yamazaki M."/>
            <person name="Watanabe K."/>
            <person name="Kumagai A."/>
            <person name="Itakura S."/>
            <person name="Fukuzumi Y."/>
            <person name="Fujimori Y."/>
            <person name="Komiyama M."/>
            <person name="Tashiro H."/>
            <person name="Tanigami A."/>
            <person name="Fujiwara T."/>
            <person name="Ono T."/>
            <person name="Yamada K."/>
            <person name="Fujii Y."/>
            <person name="Ozaki K."/>
            <person name="Hirao M."/>
            <person name="Ohmori Y."/>
            <person name="Kawabata A."/>
            <person name="Hikiji T."/>
            <person name="Kobatake N."/>
            <person name="Inagaki H."/>
            <person name="Ikema Y."/>
            <person name="Okamoto S."/>
            <person name="Okitani R."/>
            <person name="Kawakami T."/>
            <person name="Noguchi S."/>
            <person name="Itoh T."/>
            <person name="Shigeta K."/>
            <person name="Senba T."/>
            <person name="Matsumura K."/>
            <person name="Nakajima Y."/>
            <person name="Mizuno T."/>
            <person name="Morinaga M."/>
            <person name="Sasaki M."/>
            <person name="Togashi T."/>
            <person name="Oyama M."/>
            <person name="Hata H."/>
            <person name="Watanabe M."/>
            <person name="Komatsu T."/>
            <person name="Mizushima-Sugano J."/>
            <person name="Satoh T."/>
            <person name="Shirai Y."/>
            <person name="Takahashi Y."/>
            <person name="Nakagawa K."/>
            <person name="Okumura K."/>
            <person name="Nagase T."/>
            <person name="Nomura N."/>
            <person name="Kikuchi H."/>
            <person name="Masuho Y."/>
            <person name="Yamashita R."/>
            <person name="Nakai K."/>
            <person name="Yada T."/>
            <person name="Nakamura Y."/>
            <person name="Ohara O."/>
            <person name="Isogai T."/>
            <person name="Sugano S."/>
        </authorList>
    </citation>
    <scope>NUCLEOTIDE SEQUENCE [LARGE SCALE MRNA] (ISOFORMS 1 AND 3)</scope>
    <source>
        <tissue>Placenta</tissue>
        <tissue>Testis</tissue>
    </source>
</reference>
<reference key="5">
    <citation type="journal article" date="2006" name="Nature">
        <title>Analysis of the DNA sequence and duplication history of human chromosome 15.</title>
        <authorList>
            <person name="Zody M.C."/>
            <person name="Garber M."/>
            <person name="Sharpe T."/>
            <person name="Young S.K."/>
            <person name="Rowen L."/>
            <person name="O'Neill K."/>
            <person name="Whittaker C.A."/>
            <person name="Kamal M."/>
            <person name="Chang J.L."/>
            <person name="Cuomo C.A."/>
            <person name="Dewar K."/>
            <person name="FitzGerald M.G."/>
            <person name="Kodira C.D."/>
            <person name="Madan A."/>
            <person name="Qin S."/>
            <person name="Yang X."/>
            <person name="Abbasi N."/>
            <person name="Abouelleil A."/>
            <person name="Arachchi H.M."/>
            <person name="Baradarani L."/>
            <person name="Birditt B."/>
            <person name="Bloom S."/>
            <person name="Bloom T."/>
            <person name="Borowsky M.L."/>
            <person name="Burke J."/>
            <person name="Butler J."/>
            <person name="Cook A."/>
            <person name="DeArellano K."/>
            <person name="DeCaprio D."/>
            <person name="Dorris L. III"/>
            <person name="Dors M."/>
            <person name="Eichler E.E."/>
            <person name="Engels R."/>
            <person name="Fahey J."/>
            <person name="Fleetwood P."/>
            <person name="Friedman C."/>
            <person name="Gearin G."/>
            <person name="Hall J.L."/>
            <person name="Hensley G."/>
            <person name="Johnson E."/>
            <person name="Jones C."/>
            <person name="Kamat A."/>
            <person name="Kaur A."/>
            <person name="Locke D.P."/>
            <person name="Madan A."/>
            <person name="Munson G."/>
            <person name="Jaffe D.B."/>
            <person name="Lui A."/>
            <person name="Macdonald P."/>
            <person name="Mauceli E."/>
            <person name="Naylor J.W."/>
            <person name="Nesbitt R."/>
            <person name="Nicol R."/>
            <person name="O'Leary S.B."/>
            <person name="Ratcliffe A."/>
            <person name="Rounsley S."/>
            <person name="She X."/>
            <person name="Sneddon K.M.B."/>
            <person name="Stewart S."/>
            <person name="Sougnez C."/>
            <person name="Stone S.M."/>
            <person name="Topham K."/>
            <person name="Vincent D."/>
            <person name="Wang S."/>
            <person name="Zimmer A.R."/>
            <person name="Birren B.W."/>
            <person name="Hood L."/>
            <person name="Lander E.S."/>
            <person name="Nusbaum C."/>
        </authorList>
    </citation>
    <scope>NUCLEOTIDE SEQUENCE [LARGE SCALE GENOMIC DNA]</scope>
</reference>
<reference key="6">
    <citation type="submission" date="2005-07" db="EMBL/GenBank/DDBJ databases">
        <authorList>
            <person name="Mural R.J."/>
            <person name="Istrail S."/>
            <person name="Sutton G.G."/>
            <person name="Florea L."/>
            <person name="Halpern A.L."/>
            <person name="Mobarry C.M."/>
            <person name="Lippert R."/>
            <person name="Walenz B."/>
            <person name="Shatkay H."/>
            <person name="Dew I."/>
            <person name="Miller J.R."/>
            <person name="Flanigan M.J."/>
            <person name="Edwards N.J."/>
            <person name="Bolanos R."/>
            <person name="Fasulo D."/>
            <person name="Halldorsson B.V."/>
            <person name="Hannenhalli S."/>
            <person name="Turner R."/>
            <person name="Yooseph S."/>
            <person name="Lu F."/>
            <person name="Nusskern D.R."/>
            <person name="Shue B.C."/>
            <person name="Zheng X.H."/>
            <person name="Zhong F."/>
            <person name="Delcher A.L."/>
            <person name="Huson D.H."/>
            <person name="Kravitz S.A."/>
            <person name="Mouchard L."/>
            <person name="Reinert K."/>
            <person name="Remington K.A."/>
            <person name="Clark A.G."/>
            <person name="Waterman M.S."/>
            <person name="Eichler E.E."/>
            <person name="Adams M.D."/>
            <person name="Hunkapiller M.W."/>
            <person name="Myers E.W."/>
            <person name="Venter J.C."/>
        </authorList>
    </citation>
    <scope>NUCLEOTIDE SEQUENCE [LARGE SCALE GENOMIC DNA]</scope>
</reference>
<reference key="7">
    <citation type="journal article" date="2004" name="Genome Res.">
        <title>The status, quality, and expansion of the NIH full-length cDNA project: the Mammalian Gene Collection (MGC).</title>
        <authorList>
            <consortium name="The MGC Project Team"/>
        </authorList>
    </citation>
    <scope>NUCLEOTIDE SEQUENCE [LARGE SCALE MRNA]</scope>
    <source>
        <tissue>Muscle</tissue>
    </source>
</reference>
<reference key="8">
    <citation type="journal article" date="2000" name="Mol. Biol. Cell">
        <title>Human orthologs of yeast vacuolar protein sorting proteins Vps26, 29, and 35: assembly into multimeric complexes.</title>
        <authorList>
            <person name="Renfrew Haft C."/>
            <person name="de la Luz Sierra M."/>
            <person name="Bafford R."/>
            <person name="Lesniak M.A."/>
            <person name="Barr V.A."/>
            <person name="Taylor S.I."/>
        </authorList>
    </citation>
    <scope>INTERACTION WITH VPS26A</scope>
    <scope>SUBUNIT</scope>
</reference>
<reference key="9">
    <citation type="journal article" date="2002" name="J. Biol. Chem.">
        <title>The phox homology (PX) domain-dependent, 3-phosphoinositide-mediated association of sorting nexin-1 with an early sorting endosomal compartment is required for its ability to regulate epidermal growth factor receptor degradation.</title>
        <authorList>
            <person name="Cozier G.E."/>
            <person name="Carlton J."/>
            <person name="McGregor A.H."/>
            <person name="Gleeson P.A."/>
            <person name="Teasdale R.D."/>
            <person name="Mellor H."/>
            <person name="Cullen P.J."/>
        </authorList>
    </citation>
    <scope>FUNCTION</scope>
    <scope>SUBCELLULAR LOCATION</scope>
    <scope>MUTAGENESIS OF LYS-214</scope>
    <scope>INTERACTION WITH PHOSPHATIDYLINOSITIDES</scope>
</reference>
<reference key="10">
    <citation type="journal article" date="2002" name="Proc. Natl. Acad. Sci. U.S.A.">
        <title>Endosomal localization and function of sorting nexin 1.</title>
        <authorList>
            <person name="Zhong Q."/>
            <person name="Lazar C.S."/>
            <person name="Tronchere H."/>
            <person name="Sato T."/>
            <person name="Meerloo T."/>
            <person name="Yeo M."/>
            <person name="Songyang Z."/>
            <person name="Emr S.D."/>
            <person name="Gill G.N."/>
        </authorList>
    </citation>
    <scope>SUBCELLULAR LOCATION</scope>
    <scope>INTERACTION WITH SNX2</scope>
</reference>
<reference key="11">
    <citation type="journal article" date="2004" name="Curr. Biol.">
        <title>Sorting nexin-1 mediates tubular endosome-to-TGN transport through coincidence sensing of high- curvature membranes and 3-phosphoinositides.</title>
        <authorList>
            <person name="Carlton J."/>
            <person name="Bujny M."/>
            <person name="Peter B.J."/>
            <person name="Oorschot V.M."/>
            <person name="Rutherford A."/>
            <person name="Mellor H."/>
            <person name="Klumperman J."/>
            <person name="McMahon H.T."/>
            <person name="Cullen P.J."/>
        </authorList>
    </citation>
    <scope>FUNCTION</scope>
    <scope>SUBUNIT</scope>
    <scope>SUBCELLULAR LOCATION</scope>
    <scope>MUTAGENESIS OF LYS-214 AND 429-LYS--ARG-431</scope>
</reference>
<reference key="12">
    <citation type="journal article" date="2006" name="Cell">
        <title>Global, in vivo, and site-specific phosphorylation dynamics in signaling networks.</title>
        <authorList>
            <person name="Olsen J.V."/>
            <person name="Blagoev B."/>
            <person name="Gnad F."/>
            <person name="Macek B."/>
            <person name="Kumar C."/>
            <person name="Mortensen P."/>
            <person name="Mann M."/>
        </authorList>
    </citation>
    <scope>IDENTIFICATION BY MASS SPECTROMETRY [LARGE SCALE ANALYSIS]</scope>
    <source>
        <tissue>Cervix carcinoma</tissue>
    </source>
</reference>
<reference key="13">
    <citation type="journal article" date="2006" name="Mol. Biol. Cell">
        <title>An essential role for SNX1 in lysosomal sorting of protease-activated receptor-1: evidence for retromer-, Hrs-, and Tsg101-independent functions of sorting nexins.</title>
        <authorList>
            <person name="Gullapalli A."/>
            <person name="Wolfe B.L."/>
            <person name="Griffin C.T."/>
            <person name="Magnuson T."/>
            <person name="Trejo J."/>
        </authorList>
    </citation>
    <scope>FUNCTION</scope>
</reference>
<reference key="14">
    <citation type="journal article" date="2007" name="J. Cell Sci.">
        <title>The retromer component sorting nexin-1 is required for efficient retrograde transport of Shiga toxin from early endosome to the trans Golgi network.</title>
        <authorList>
            <person name="Bujny M.V."/>
            <person name="Popoff V."/>
            <person name="Johannes L."/>
            <person name="Cullen P.J."/>
        </authorList>
    </citation>
    <scope>FUNCTION</scope>
</reference>
<reference key="15">
    <citation type="journal article" date="2007" name="Mol. Cell. Biol.">
        <title>Interchangeable but essential functions of SNX1 and SNX2 in the association of retromer with endosomes and the trafficking of mannose 6-phosphate receptors.</title>
        <authorList>
            <person name="Rojas R."/>
            <person name="Kametaka S."/>
            <person name="Haft C.R."/>
            <person name="Bonifacino J.S."/>
        </authorList>
    </citation>
    <scope>FUNCTION</scope>
    <scope>SUBCELLULAR LOCATION</scope>
    <scope>SUBUNIT</scope>
</reference>
<reference key="16">
    <citation type="journal article" date="2008" name="Proc. Natl. Acad. Sci. U.S.A.">
        <title>A quantitative atlas of mitotic phosphorylation.</title>
        <authorList>
            <person name="Dephoure N."/>
            <person name="Zhou C."/>
            <person name="Villen J."/>
            <person name="Beausoleil S.A."/>
            <person name="Bakalarski C.E."/>
            <person name="Elledge S.J."/>
            <person name="Gygi S.P."/>
        </authorList>
    </citation>
    <scope>PHOSPHORYLATION [LARGE SCALE ANALYSIS] AT SER-32; SER-39 AND SER-188</scope>
    <scope>IDENTIFICATION BY MASS SPECTROMETRY [LARGE SCALE ANALYSIS]</scope>
    <source>
        <tissue>Cervix carcinoma</tissue>
    </source>
</reference>
<reference key="17">
    <citation type="journal article" date="2008" name="Traffic">
        <title>SNX1 defines an early endosomal recycling exit for sortilin and mannose 6-phosphate receptors.</title>
        <authorList>
            <person name="Mari M."/>
            <person name="Bujny M.V."/>
            <person name="Zeuschner D."/>
            <person name="Geerts W.J."/>
            <person name="Griffith J."/>
            <person name="Petersen C.M."/>
            <person name="Cullen P.J."/>
            <person name="Klumperman J."/>
            <person name="Geuze H.J."/>
        </authorList>
    </citation>
    <scope>FUNCTION</scope>
    <scope>SUBCELLULAR LOCATION</scope>
</reference>
<reference key="18">
    <citation type="journal article" date="2009" name="Cell Res.">
        <title>The retromer component SNX6 interacts with dynactin p150(Glued) and mediates endosome-to-TGN transport.</title>
        <authorList>
            <person name="Hong Z."/>
            <person name="Yang Y."/>
            <person name="Zhang C."/>
            <person name="Niu Y."/>
            <person name="Li K."/>
            <person name="Zhao X."/>
            <person name="Liu J.J."/>
        </authorList>
    </citation>
    <scope>INTERACTION WITH SNX6</scope>
</reference>
<reference key="19">
    <citation type="journal article" date="2009" name="Dev. Cell">
        <title>The retromer coat complex coordinates endosomal sorting and dynein-mediated transport, with carrier recognition by the trans-Golgi network.</title>
        <authorList>
            <person name="Wassmer T."/>
            <person name="Attar N."/>
            <person name="Harterink M."/>
            <person name="van Weering J.R."/>
            <person name="Traer C.J."/>
            <person name="Oakley J."/>
            <person name="Goud B."/>
            <person name="Stephens D.J."/>
            <person name="Verkade P."/>
            <person name="Korswagen H.C."/>
            <person name="Cullen P.J."/>
        </authorList>
    </citation>
    <scope>SUBUNIT</scope>
    <scope>INTERACTION WITH SNX5; SNX6; VPS26A; VPS29; VPS35 AND DENND5A</scope>
</reference>
<reference key="20">
    <citation type="journal article" date="2009" name="EMBO J.">
        <title>Amphipathic motifs in BAR domains are essential for membrane curvature sensing.</title>
        <authorList>
            <person name="Bhatia V.K."/>
            <person name="Madsen K.L."/>
            <person name="Bolinger P.Y."/>
            <person name="Kunding A."/>
            <person name="Hedegaard P."/>
            <person name="Gether U."/>
            <person name="Stamou D."/>
        </authorList>
    </citation>
    <scope>FUNCTION</scope>
    <scope>DOMAIN</scope>
</reference>
<reference key="21">
    <citation type="journal article" date="2009" name="Sci. Signal.">
        <title>Quantitative phosphoproteomic analysis of T cell receptor signaling reveals system-wide modulation of protein-protein interactions.</title>
        <authorList>
            <person name="Mayya V."/>
            <person name="Lundgren D.H."/>
            <person name="Hwang S.-I."/>
            <person name="Rezaul K."/>
            <person name="Wu L."/>
            <person name="Eng J.K."/>
            <person name="Rodionov V."/>
            <person name="Han D.K."/>
        </authorList>
    </citation>
    <scope>PHOSPHORYLATION [LARGE SCALE ANALYSIS] AT SER-188</scope>
    <scope>IDENTIFICATION BY MASS SPECTROMETRY [LARGE SCALE ANALYSIS]</scope>
    <source>
        <tissue>Leukemic T-cell</tissue>
    </source>
</reference>
<reference key="22">
    <citation type="journal article" date="2009" name="Science">
        <title>Lysine acetylation targets protein complexes and co-regulates major cellular functions.</title>
        <authorList>
            <person name="Choudhary C."/>
            <person name="Kumar C."/>
            <person name="Gnad F."/>
            <person name="Nielsen M.L."/>
            <person name="Rehman M."/>
            <person name="Walther T.C."/>
            <person name="Olsen J.V."/>
            <person name="Mann M."/>
        </authorList>
    </citation>
    <scope>ACETYLATION [LARGE SCALE ANALYSIS] AT LYS-237</scope>
    <scope>IDENTIFICATION BY MASS SPECTROMETRY [LARGE SCALE ANALYSIS]</scope>
</reference>
<reference key="23">
    <citation type="journal article" date="2009" name="Traffic">
        <title>Analysis of articulation between clathrin and retromer in retrograde sorting on early endosomes.</title>
        <authorList>
            <person name="Popoff V."/>
            <person name="Mardones G.A."/>
            <person name="Bai S.K."/>
            <person name="Chambon V."/>
            <person name="Tenza D."/>
            <person name="Burgos P.V."/>
            <person name="Shi A."/>
            <person name="Benaroch P."/>
            <person name="Urbe S."/>
            <person name="Lamaze C."/>
            <person name="Grant B.D."/>
            <person name="Raposo G."/>
            <person name="Johannes L."/>
        </authorList>
    </citation>
    <scope>INTERACTION WITH DNAJC13</scope>
    <scope>SUBCELLULAR LOCATION</scope>
</reference>
<reference key="24">
    <citation type="journal article" date="2010" name="Biochem. Biophys. Res. Commun.">
        <title>Implication of mouse Vps26b-Vps29-Vps35 retromer complex in sortilin trafficking.</title>
        <authorList>
            <person name="Kim E."/>
            <person name="Lee Y."/>
            <person name="Lee H.J."/>
            <person name="Kim J.S."/>
            <person name="Song B.S."/>
            <person name="Huh J.W."/>
            <person name="Lee S.R."/>
            <person name="Kim S.U."/>
            <person name="Kim S.H."/>
            <person name="Hong Y."/>
            <person name="Shim I."/>
            <person name="Chang K.T."/>
        </authorList>
    </citation>
    <scope>FUNCTION</scope>
    <scope>SUBCELLULAR LOCATION</scope>
</reference>
<reference key="25">
    <citation type="journal article" date="2010" name="Sci. Signal.">
        <title>Quantitative phosphoproteomics reveals widespread full phosphorylation site occupancy during mitosis.</title>
        <authorList>
            <person name="Olsen J.V."/>
            <person name="Vermeulen M."/>
            <person name="Santamaria A."/>
            <person name="Kumar C."/>
            <person name="Miller M.L."/>
            <person name="Jensen L.J."/>
            <person name="Gnad F."/>
            <person name="Cox J."/>
            <person name="Jensen T.S."/>
            <person name="Nigg E.A."/>
            <person name="Brunak S."/>
            <person name="Mann M."/>
        </authorList>
    </citation>
    <scope>PHOSPHORYLATION [LARGE SCALE ANALYSIS] AT SER-188</scope>
    <scope>IDENTIFICATION BY MASS SPECTROMETRY [LARGE SCALE ANALYSIS]</scope>
    <source>
        <tissue>Cervix carcinoma</tissue>
    </source>
</reference>
<reference key="26">
    <citation type="journal article" date="2010" name="Traffic">
        <title>A novel, retromer-independent role for sorting nexins 1 and 2 in RhoG-dependent membrane remodeling.</title>
        <authorList>
            <person name="Prosser D.C."/>
            <person name="Tran D."/>
            <person name="Schooley A."/>
            <person name="Wendland B."/>
            <person name="Ngsee J.K."/>
        </authorList>
    </citation>
    <scope>FUNCTION</scope>
    <scope>INTERACTION WITH KALRN AND RHOG</scope>
    <scope>SUBCELLULAR LOCATION</scope>
</reference>
<reference key="27">
    <citation type="journal article" date="2010" name="Traffic">
        <title>Regulation of P2Y1 receptor traffic by sorting Nexin 1 is retromer independent.</title>
        <authorList>
            <person name="Nisar S."/>
            <person name="Kelly E."/>
            <person name="Cullen P.J."/>
            <person name="Mundell S.J."/>
        </authorList>
    </citation>
    <scope>FUNCTION</scope>
</reference>
<reference key="28">
    <citation type="journal article" date="2011" name="BMC Syst. Biol.">
        <title>Initial characterization of the human central proteome.</title>
        <authorList>
            <person name="Burkard T.R."/>
            <person name="Planyavsky M."/>
            <person name="Kaupe I."/>
            <person name="Breitwieser F.P."/>
            <person name="Buerckstuemmer T."/>
            <person name="Bennett K.L."/>
            <person name="Superti-Furga G."/>
            <person name="Colinge J."/>
        </authorList>
    </citation>
    <scope>IDENTIFICATION BY MASS SPECTROMETRY [LARGE SCALE ANALYSIS]</scope>
</reference>
<reference key="29">
    <citation type="journal article" date="2012" name="Mol. Cell. Biol.">
        <title>The role of ceroid lipofuscinosis neuronal protein 5 (CLN5) in endosomal sorting.</title>
        <authorList>
            <person name="Mamo A."/>
            <person name="Jules F."/>
            <person name="Dumaresq-Doiron K."/>
            <person name="Costantino S."/>
            <person name="Lefrancois S."/>
        </authorList>
    </citation>
    <scope>SUBCELLULAR LOCATION</scope>
</reference>
<reference key="30">
    <citation type="journal article" date="2013" name="J. Biol. Chem.">
        <title>Sorting nexin 1 loss results in D5 dopamine receptor dysfunction in human renal proximal tubule cells and hypertension in mice.</title>
        <authorList>
            <person name="Villar V.A."/>
            <person name="Jones J.E."/>
            <person name="Armando I."/>
            <person name="Asico L.D."/>
            <person name="Escano C.S. Jr."/>
            <person name="Lee H."/>
            <person name="Wang X."/>
            <person name="Yang Y."/>
            <person name="Pascua-Crusan A.M."/>
            <person name="Palmes-Saloma C.P."/>
            <person name="Felder R.A."/>
            <person name="Jose P.A."/>
        </authorList>
    </citation>
    <scope>FUNCTION</scope>
    <scope>INTERACTION WITH DRD5</scope>
</reference>
<reference key="31">
    <citation type="journal article" date="2013" name="J. Proteome Res.">
        <title>Toward a comprehensive characterization of a human cancer cell phosphoproteome.</title>
        <authorList>
            <person name="Zhou H."/>
            <person name="Di Palma S."/>
            <person name="Preisinger C."/>
            <person name="Peng M."/>
            <person name="Polat A.N."/>
            <person name="Heck A.J."/>
            <person name="Mohammed S."/>
        </authorList>
    </citation>
    <scope>PHOSPHORYLATION [LARGE SCALE ANALYSIS] AT SER-72; SER-188 AND SER-280</scope>
    <scope>IDENTIFICATION BY MASS SPECTROMETRY [LARGE SCALE ANALYSIS]</scope>
    <source>
        <tissue>Cervix carcinoma</tissue>
        <tissue>Erythroleukemia</tissue>
    </source>
</reference>
<reference key="32">
    <citation type="journal article" date="2014" name="J. Proteomics">
        <title>An enzyme assisted RP-RPLC approach for in-depth analysis of human liver phosphoproteome.</title>
        <authorList>
            <person name="Bian Y."/>
            <person name="Song C."/>
            <person name="Cheng K."/>
            <person name="Dong M."/>
            <person name="Wang F."/>
            <person name="Huang J."/>
            <person name="Sun D."/>
            <person name="Wang L."/>
            <person name="Ye M."/>
            <person name="Zou H."/>
        </authorList>
    </citation>
    <scope>PHOSPHORYLATION [LARGE SCALE ANALYSIS] AT SER-32; SER-39; THR-48; SER-188 AND SER-280</scope>
    <scope>IDENTIFICATION BY MASS SPECTROMETRY [LARGE SCALE ANALYSIS]</scope>
    <source>
        <tissue>Liver</tissue>
    </source>
</reference>
<reference key="33">
    <citation type="journal article" date="2005" name="Mol. Biol. Cell">
        <title>Determinants of the endosomal localization of sorting nexin 1.</title>
        <authorList>
            <person name="Zhong Q."/>
            <person name="Watson M.J."/>
            <person name="Lazar C.S."/>
            <person name="Hounslow A.M."/>
            <person name="Waltho J.P."/>
            <person name="Gill G.N."/>
        </authorList>
    </citation>
    <scope>STRUCTURE BY NMR OF 142-269</scope>
    <scope>SUBCELLULAR LOCATION</scope>
</reference>
<reference key="34">
    <citation type="journal article" date="2012" name="EMBO J.">
        <title>Molecular basis for SNX-BAR-mediated assembly of distinct endosomal sorting tubules.</title>
        <authorList>
            <person name="van Weering J.R."/>
            <person name="Sessions R.B."/>
            <person name="Traer C.J."/>
            <person name="Kloer D.P."/>
            <person name="Bhatia V.K."/>
            <person name="Stamou D."/>
            <person name="Carlsson S.R."/>
            <person name="Hurley J.H."/>
            <person name="Cullen P.J."/>
        </authorList>
    </citation>
    <scope>X-RAY CRYSTALLOGRAPHY (2.8 ANGSTROMS) OF 301-522</scope>
    <scope>FUNCTION</scope>
    <scope>INTERACTION WITH SNX5; SNX6 AND SNX32</scope>
    <scope>SELF-ASSOCIATION</scope>
    <scope>SUBUNIT</scope>
    <scope>DOMAIN</scope>
    <scope>MUTAGENESIS OF 287-MET-PHE-288; LYS-442 AND LYS-445</scope>
</reference>
<proteinExistence type="evidence at protein level"/>
<feature type="chain" id="PRO_0000213835" description="Sorting nexin-1">
    <location>
        <begin position="1"/>
        <end position="522"/>
    </location>
</feature>
<feature type="domain" description="PX" evidence="4">
    <location>
        <begin position="143"/>
        <end position="272"/>
    </location>
</feature>
<feature type="domain" description="BAR">
    <location>
        <begin position="302"/>
        <end position="522"/>
    </location>
</feature>
<feature type="region of interest" description="Disordered" evidence="5">
    <location>
        <begin position="1"/>
        <end position="84"/>
    </location>
</feature>
<feature type="region of interest" description="Disordered" evidence="5">
    <location>
        <begin position="115"/>
        <end position="142"/>
    </location>
</feature>
<feature type="region of interest" description="Membrane-binding amphipathic helix" evidence="28">
    <location>
        <begin position="281"/>
        <end position="298"/>
    </location>
</feature>
<feature type="compositionally biased region" description="Acidic residues" evidence="5">
    <location>
        <begin position="35"/>
        <end position="45"/>
    </location>
</feature>
<feature type="compositionally biased region" description="Polar residues" evidence="5">
    <location>
        <begin position="55"/>
        <end position="73"/>
    </location>
</feature>
<feature type="compositionally biased region" description="Acidic residues" evidence="5">
    <location>
        <begin position="132"/>
        <end position="142"/>
    </location>
</feature>
<feature type="binding site" evidence="1">
    <location>
        <position position="186"/>
    </location>
    <ligand>
        <name>a 1,2-diacyl-sn-glycero-3-phospho-(1D-myo-inositol-3-phosphate)</name>
        <dbReference type="ChEBI" id="CHEBI:58088"/>
    </ligand>
</feature>
<feature type="binding site" evidence="1">
    <location>
        <position position="188"/>
    </location>
    <ligand>
        <name>a 1,2-diacyl-sn-glycero-3-phospho-(1D-myo-inositol-3-phosphate)</name>
        <dbReference type="ChEBI" id="CHEBI:58088"/>
    </ligand>
</feature>
<feature type="binding site" evidence="1">
    <location>
        <position position="214"/>
    </location>
    <ligand>
        <name>a 1,2-diacyl-sn-glycero-3-phospho-(1D-myo-inositol-3-phosphate)</name>
        <dbReference type="ChEBI" id="CHEBI:58088"/>
    </ligand>
</feature>
<feature type="binding site" evidence="1">
    <location>
        <position position="238"/>
    </location>
    <ligand>
        <name>a 1,2-diacyl-sn-glycero-3-phospho-(1D-myo-inositol-3-phosphate)</name>
        <dbReference type="ChEBI" id="CHEBI:58088"/>
    </ligand>
</feature>
<feature type="modified residue" description="Phosphoserine" evidence="31 36">
    <location>
        <position position="32"/>
    </location>
</feature>
<feature type="modified residue" description="Phosphoserine" evidence="31 36">
    <location>
        <position position="39"/>
    </location>
</feature>
<feature type="modified residue" description="Phosphothreonine" evidence="3">
    <location>
        <position position="41"/>
    </location>
</feature>
<feature type="modified residue" description="Phosphothreonine" evidence="36">
    <location>
        <position position="48"/>
    </location>
</feature>
<feature type="modified residue" description="Phosphoserine" evidence="3">
    <location>
        <position position="58"/>
    </location>
</feature>
<feature type="modified residue" description="Phosphoserine" evidence="35">
    <location>
        <position position="72"/>
    </location>
</feature>
<feature type="modified residue" description="Phosphoserine" evidence="31 33 34 35 36">
    <location>
        <position position="188"/>
    </location>
</feature>
<feature type="modified residue" description="N6-acetyllysine" evidence="32">
    <location>
        <position position="237"/>
    </location>
</feature>
<feature type="modified residue" description="Phosphoserine" evidence="35 36">
    <location>
        <position position="280"/>
    </location>
</feature>
<feature type="splice variant" id="VSP_006189" description="In isoform 1A." evidence="30">
    <location>
        <begin position="91"/>
        <end position="155"/>
    </location>
</feature>
<feature type="splice variant" id="VSP_044823" description="In isoform 3." evidence="25">
    <original>LAKYWEAFLPEAKAIS</original>
    <variation>AGEQLGIRSGILLTKKLPRYSKFFSTVHKFCAAASLWKWGFFLSAYLSYLF</variation>
    <location>
        <begin position="507"/>
        <end position="522"/>
    </location>
</feature>
<feature type="sequence variant" id="VAR_052477" description="In dbSNP:rs1049501.">
    <original>S</original>
    <variation>Y</variation>
    <location>
        <position position="115"/>
    </location>
</feature>
<feature type="sequence variant" id="VAR_034507" description="In dbSNP:rs1802376.">
    <original>D</original>
    <variation>N</variation>
    <location>
        <position position="466"/>
    </location>
</feature>
<feature type="mutagenesis site" description="Abolishes phosphatidylinositol phosphate binding. Abolishes endosomal location." evidence="8 9">
    <original>K</original>
    <variation>A</variation>
    <location>
        <position position="214"/>
    </location>
</feature>
<feature type="mutagenesis site" description="Abolishes membrane remodeling capacity; no effect on dimerization." evidence="22">
    <original>MF</original>
    <variation>EE</variation>
    <location>
        <begin position="287"/>
        <end position="288"/>
    </location>
</feature>
<feature type="mutagenesis site" description="Loss of endosomal location." evidence="9">
    <original>KKR</original>
    <variation>EEE</variation>
    <location>
        <begin position="429"/>
        <end position="431"/>
    </location>
</feature>
<feature type="mutagenesis site" description="No effect on membrane remodeling and membrane binding; when associated with A-445." evidence="22">
    <original>K</original>
    <variation>A</variation>
    <location>
        <position position="442"/>
    </location>
</feature>
<feature type="mutagenesis site" description="No effect on membrane remodeling and membrane binding; when associated with A-442." evidence="22">
    <original>K</original>
    <variation>A</variation>
    <location>
        <position position="445"/>
    </location>
</feature>
<feature type="sequence conflict" description="In Ref. 2; AAC17182." evidence="30" ref="2">
    <original>P</original>
    <variation>S</variation>
    <location>
        <position position="117"/>
    </location>
</feature>
<feature type="sequence conflict" description="In Ref. 2; AAC17182/AAC17183." evidence="30" ref="2">
    <original>P</original>
    <variation>S</variation>
    <location>
        <position position="211"/>
    </location>
</feature>
<feature type="sequence conflict" description="In Ref. 4; BAC87312." evidence="30" ref="4">
    <original>Y</original>
    <variation>C</variation>
    <location>
        <position position="502"/>
    </location>
</feature>
<feature type="strand" evidence="37">
    <location>
        <begin position="173"/>
        <end position="176"/>
    </location>
</feature>
<feature type="helix" evidence="37">
    <location>
        <begin position="187"/>
        <end position="199"/>
    </location>
</feature>
<feature type="strand" evidence="37">
    <location>
        <begin position="202"/>
        <end position="205"/>
    </location>
</feature>
<feature type="strand" evidence="37">
    <location>
        <begin position="210"/>
        <end position="213"/>
    </location>
</feature>
<feature type="strand" evidence="37">
    <location>
        <begin position="216"/>
        <end position="221"/>
    </location>
</feature>
<feature type="helix" evidence="37">
    <location>
        <begin position="234"/>
        <end position="251"/>
    </location>
</feature>
<feature type="helix" evidence="37">
    <location>
        <begin position="253"/>
        <end position="256"/>
    </location>
</feature>
<feature type="helix" evidence="37">
    <location>
        <begin position="259"/>
        <end position="262"/>
    </location>
</feature>
<feature type="turn" evidence="37">
    <location>
        <begin position="263"/>
        <end position="266"/>
    </location>
</feature>
<feature type="helix" evidence="38">
    <location>
        <begin position="307"/>
        <end position="357"/>
    </location>
</feature>
<feature type="helix" evidence="38">
    <location>
        <begin position="361"/>
        <end position="438"/>
    </location>
</feature>
<feature type="strand" evidence="38">
    <location>
        <begin position="439"/>
        <end position="441"/>
    </location>
</feature>
<feature type="helix" evidence="38">
    <location>
        <begin position="443"/>
        <end position="519"/>
    </location>
</feature>
<accession>Q13596</accession>
<accession>A6NM19</accession>
<accession>A8K6T7</accession>
<accession>H0Y2M5</accession>
<accession>O60750</accession>
<accession>O60751</accession>
<accession>Q6ZRJ8</accession>
<organism>
    <name type="scientific">Homo sapiens</name>
    <name type="common">Human</name>
    <dbReference type="NCBI Taxonomy" id="9606"/>
    <lineage>
        <taxon>Eukaryota</taxon>
        <taxon>Metazoa</taxon>
        <taxon>Chordata</taxon>
        <taxon>Craniata</taxon>
        <taxon>Vertebrata</taxon>
        <taxon>Euteleostomi</taxon>
        <taxon>Mammalia</taxon>
        <taxon>Eutheria</taxon>
        <taxon>Euarchontoglires</taxon>
        <taxon>Primates</taxon>
        <taxon>Haplorrhini</taxon>
        <taxon>Catarrhini</taxon>
        <taxon>Hominidae</taxon>
        <taxon>Homo</taxon>
    </lineage>
</organism>
<dbReference type="EMBL" id="U53225">
    <property type="protein sequence ID" value="AAA98672.1"/>
    <property type="molecule type" value="mRNA"/>
</dbReference>
<dbReference type="EMBL" id="AF065483">
    <property type="protein sequence ID" value="AAC17182.1"/>
    <property type="molecule type" value="mRNA"/>
</dbReference>
<dbReference type="EMBL" id="AF065484">
    <property type="protein sequence ID" value="AAC17183.1"/>
    <property type="molecule type" value="mRNA"/>
</dbReference>
<dbReference type="EMBL" id="BT006983">
    <property type="protein sequence ID" value="AAP35629.1"/>
    <property type="molecule type" value="mRNA"/>
</dbReference>
<dbReference type="EMBL" id="AK128179">
    <property type="protein sequence ID" value="BAC87312.1"/>
    <property type="molecule type" value="mRNA"/>
</dbReference>
<dbReference type="EMBL" id="AK291752">
    <property type="protein sequence ID" value="BAF84441.1"/>
    <property type="molecule type" value="mRNA"/>
</dbReference>
<dbReference type="EMBL" id="AC021541">
    <property type="status" value="NOT_ANNOTATED_CDS"/>
    <property type="molecule type" value="Genomic_DNA"/>
</dbReference>
<dbReference type="EMBL" id="AC100840">
    <property type="status" value="NOT_ANNOTATED_CDS"/>
    <property type="molecule type" value="Genomic_DNA"/>
</dbReference>
<dbReference type="EMBL" id="CH471082">
    <property type="protein sequence ID" value="EAW77663.1"/>
    <property type="molecule type" value="Genomic_DNA"/>
</dbReference>
<dbReference type="EMBL" id="CH471082">
    <property type="protein sequence ID" value="EAW77665.1"/>
    <property type="molecule type" value="Genomic_DNA"/>
</dbReference>
<dbReference type="EMBL" id="BC000357">
    <property type="protein sequence ID" value="AAH00357.1"/>
    <property type="molecule type" value="mRNA"/>
</dbReference>
<dbReference type="CCDS" id="CCDS32266.1">
    <molecule id="Q13596-1"/>
</dbReference>
<dbReference type="CCDS" id="CCDS32268.1">
    <molecule id="Q13596-2"/>
</dbReference>
<dbReference type="CCDS" id="CCDS58371.1">
    <molecule id="Q13596-3"/>
</dbReference>
<dbReference type="PIR" id="G02522">
    <property type="entry name" value="G02522"/>
</dbReference>
<dbReference type="RefSeq" id="NP_001229862.1">
    <molecule id="Q13596-3"/>
    <property type="nucleotide sequence ID" value="NM_001242933.2"/>
</dbReference>
<dbReference type="RefSeq" id="NP_003090.2">
    <molecule id="Q13596-1"/>
    <property type="nucleotide sequence ID" value="NM_003099.4"/>
</dbReference>
<dbReference type="RefSeq" id="NP_683758.1">
    <molecule id="Q13596-2"/>
    <property type="nucleotide sequence ID" value="NM_148955.4"/>
</dbReference>
<dbReference type="PDB" id="2I4K">
    <property type="method" value="NMR"/>
    <property type="chains" value="A=142-269"/>
</dbReference>
<dbReference type="PDB" id="4FZS">
    <property type="method" value="X-ray"/>
    <property type="resolution" value="2.80 A"/>
    <property type="chains" value="A/B=301-522"/>
</dbReference>
<dbReference type="PDB" id="8A1G">
    <property type="method" value="X-ray"/>
    <property type="resolution" value="2.50 A"/>
    <property type="chains" value="A/B=301-522"/>
</dbReference>
<dbReference type="PDB" id="8ABQ">
    <property type="method" value="X-ray"/>
    <property type="resolution" value="2.81 A"/>
    <property type="chains" value="A/B=301-522"/>
</dbReference>
<dbReference type="PDB" id="8AFZ">
    <property type="method" value="EM"/>
    <property type="resolution" value="10.00 A"/>
    <property type="chains" value="A=1-522"/>
</dbReference>
<dbReference type="PDBsum" id="2I4K"/>
<dbReference type="PDBsum" id="4FZS"/>
<dbReference type="PDBsum" id="8A1G"/>
<dbReference type="PDBsum" id="8ABQ"/>
<dbReference type="PDBsum" id="8AFZ"/>
<dbReference type="BMRB" id="Q13596"/>
<dbReference type="EMDB" id="EMD-15413"/>
<dbReference type="SMR" id="Q13596"/>
<dbReference type="BioGRID" id="112525">
    <property type="interactions" value="241"/>
</dbReference>
<dbReference type="ComplexPortal" id="CPX-8823">
    <property type="entry name" value="SNX1-SNX5 sorting nexin complex"/>
</dbReference>
<dbReference type="ComplexPortal" id="CPX-8835">
    <property type="entry name" value="SNX1-SNX6 sorting nexin complex"/>
</dbReference>
<dbReference type="ComplexPortal" id="CPX-8837">
    <property type="entry name" value="SNX1-SNX32 sorting nexin complex"/>
</dbReference>
<dbReference type="CORUM" id="Q13596"/>
<dbReference type="DIP" id="DIP-398N"/>
<dbReference type="FunCoup" id="Q13596">
    <property type="interactions" value="3653"/>
</dbReference>
<dbReference type="IntAct" id="Q13596">
    <property type="interactions" value="117"/>
</dbReference>
<dbReference type="MINT" id="Q13596"/>
<dbReference type="STRING" id="9606.ENSP00000261889"/>
<dbReference type="MoonDB" id="Q13596">
    <property type="type" value="Predicted"/>
</dbReference>
<dbReference type="TCDB" id="3.A.34.1.1">
    <property type="family name" value="the sorting nexins of the escrt complexes (sn-escrt)"/>
</dbReference>
<dbReference type="TCDB" id="8.A.194.1.1">
    <property type="family name" value="the sorting nexin (snx) family"/>
</dbReference>
<dbReference type="GlyGen" id="Q13596">
    <property type="glycosylation" value="1 site, 1 O-linked glycan (1 site)"/>
</dbReference>
<dbReference type="iPTMnet" id="Q13596"/>
<dbReference type="MetOSite" id="Q13596"/>
<dbReference type="PhosphoSitePlus" id="Q13596"/>
<dbReference type="BioMuta" id="SNX1"/>
<dbReference type="DMDM" id="17380569"/>
<dbReference type="jPOST" id="Q13596"/>
<dbReference type="MassIVE" id="Q13596"/>
<dbReference type="PaxDb" id="9606-ENSP00000261889"/>
<dbReference type="PeptideAtlas" id="Q13596"/>
<dbReference type="ProteomicsDB" id="34313"/>
<dbReference type="ProteomicsDB" id="59589">
    <molecule id="Q13596-1"/>
</dbReference>
<dbReference type="ProteomicsDB" id="59590">
    <molecule id="Q13596-2"/>
</dbReference>
<dbReference type="Pumba" id="Q13596"/>
<dbReference type="Antibodypedia" id="13352">
    <property type="antibodies" value="378 antibodies from 38 providers"/>
</dbReference>
<dbReference type="DNASU" id="6642"/>
<dbReference type="Ensembl" id="ENST00000261889.9">
    <molecule id="Q13596-3"/>
    <property type="protein sequence ID" value="ENSP00000261889.5"/>
    <property type="gene ID" value="ENSG00000028528.15"/>
</dbReference>
<dbReference type="Ensembl" id="ENST00000559844.6">
    <molecule id="Q13596-1"/>
    <property type="protein sequence ID" value="ENSP00000453785.1"/>
    <property type="gene ID" value="ENSG00000028528.15"/>
</dbReference>
<dbReference type="Ensembl" id="ENST00000561026.5">
    <molecule id="Q13596-2"/>
    <property type="protein sequence ID" value="ENSP00000453567.1"/>
    <property type="gene ID" value="ENSG00000028528.15"/>
</dbReference>
<dbReference type="GeneID" id="6642"/>
<dbReference type="KEGG" id="hsa:6642"/>
<dbReference type="MANE-Select" id="ENST00000559844.6">
    <property type="protein sequence ID" value="ENSP00000453785.1"/>
    <property type="RefSeq nucleotide sequence ID" value="NM_003099.5"/>
    <property type="RefSeq protein sequence ID" value="NP_003090.2"/>
</dbReference>
<dbReference type="UCSC" id="uc002amv.4">
    <molecule id="Q13596-1"/>
    <property type="organism name" value="human"/>
</dbReference>
<dbReference type="AGR" id="HGNC:11172"/>
<dbReference type="CTD" id="6642"/>
<dbReference type="DisGeNET" id="6642"/>
<dbReference type="GeneCards" id="SNX1"/>
<dbReference type="HGNC" id="HGNC:11172">
    <property type="gene designation" value="SNX1"/>
</dbReference>
<dbReference type="HPA" id="ENSG00000028528">
    <property type="expression patterns" value="Low tissue specificity"/>
</dbReference>
<dbReference type="MIM" id="601272">
    <property type="type" value="gene"/>
</dbReference>
<dbReference type="neXtProt" id="NX_Q13596"/>
<dbReference type="NIAGADS" id="ENSG00000028528"/>
<dbReference type="OpenTargets" id="ENSG00000028528"/>
<dbReference type="PharmGKB" id="PA36011"/>
<dbReference type="VEuPathDB" id="HostDB:ENSG00000028528"/>
<dbReference type="eggNOG" id="KOG2273">
    <property type="taxonomic scope" value="Eukaryota"/>
</dbReference>
<dbReference type="GeneTree" id="ENSGT00940000155889"/>
<dbReference type="HOGENOM" id="CLU_022783_2_0_1"/>
<dbReference type="InParanoid" id="Q13596"/>
<dbReference type="OMA" id="MLVNHRK"/>
<dbReference type="OrthoDB" id="271164at2759"/>
<dbReference type="PAN-GO" id="Q13596">
    <property type="GO annotations" value="4 GO annotations based on evolutionary models"/>
</dbReference>
<dbReference type="PhylomeDB" id="Q13596"/>
<dbReference type="TreeFam" id="TF313698"/>
<dbReference type="PathwayCommons" id="Q13596"/>
<dbReference type="SignaLink" id="Q13596"/>
<dbReference type="BioGRID-ORCS" id="6642">
    <property type="hits" value="18 hits in 1158 CRISPR screens"/>
</dbReference>
<dbReference type="CD-CODE" id="FB4E32DD">
    <property type="entry name" value="Presynaptic clusters and postsynaptic densities"/>
</dbReference>
<dbReference type="ChiTaRS" id="SNX1">
    <property type="organism name" value="human"/>
</dbReference>
<dbReference type="EvolutionaryTrace" id="Q13596"/>
<dbReference type="GeneWiki" id="SNX1"/>
<dbReference type="GenomeRNAi" id="6642"/>
<dbReference type="Pharos" id="Q13596">
    <property type="development level" value="Tbio"/>
</dbReference>
<dbReference type="PRO" id="PR:Q13596"/>
<dbReference type="Proteomes" id="UP000005640">
    <property type="component" value="Chromosome 15"/>
</dbReference>
<dbReference type="RNAct" id="Q13596">
    <property type="molecule type" value="protein"/>
</dbReference>
<dbReference type="Bgee" id="ENSG00000028528">
    <property type="expression patterns" value="Expressed in right lobe of thyroid gland and 209 other cell types or tissues"/>
</dbReference>
<dbReference type="ExpressionAtlas" id="Q13596">
    <property type="expression patterns" value="baseline and differential"/>
</dbReference>
<dbReference type="GO" id="GO:0005737">
    <property type="term" value="C:cytoplasm"/>
    <property type="evidence" value="ECO:0000314"/>
    <property type="project" value="HGNC-UCL"/>
</dbReference>
<dbReference type="GO" id="GO:0005829">
    <property type="term" value="C:cytosol"/>
    <property type="evidence" value="ECO:0007669"/>
    <property type="project" value="GOC"/>
</dbReference>
<dbReference type="GO" id="GO:0031901">
    <property type="term" value="C:early endosome membrane"/>
    <property type="evidence" value="ECO:0000314"/>
    <property type="project" value="UniProtKB"/>
</dbReference>
<dbReference type="GO" id="GO:0005768">
    <property type="term" value="C:endosome"/>
    <property type="evidence" value="ECO:0000314"/>
    <property type="project" value="HPA"/>
</dbReference>
<dbReference type="GO" id="GO:0010008">
    <property type="term" value="C:endosome membrane"/>
    <property type="evidence" value="ECO:0000314"/>
    <property type="project" value="UniProtKB"/>
</dbReference>
<dbReference type="GO" id="GO:0005794">
    <property type="term" value="C:Golgi apparatus"/>
    <property type="evidence" value="ECO:0007669"/>
    <property type="project" value="UniProtKB-SubCell"/>
</dbReference>
<dbReference type="GO" id="GO:0043231">
    <property type="term" value="C:intracellular membrane-bounded organelle"/>
    <property type="evidence" value="ECO:0000314"/>
    <property type="project" value="HPA"/>
</dbReference>
<dbReference type="GO" id="GO:0030027">
    <property type="term" value="C:lamellipodium"/>
    <property type="evidence" value="ECO:0007669"/>
    <property type="project" value="UniProtKB-SubCell"/>
</dbReference>
<dbReference type="GO" id="GO:0005764">
    <property type="term" value="C:lysosome"/>
    <property type="evidence" value="ECO:0000314"/>
    <property type="project" value="HPA"/>
</dbReference>
<dbReference type="GO" id="GO:0016020">
    <property type="term" value="C:membrane"/>
    <property type="evidence" value="ECO:0000314"/>
    <property type="project" value="UniProtKB"/>
</dbReference>
<dbReference type="GO" id="GO:0032991">
    <property type="term" value="C:protein-containing complex"/>
    <property type="evidence" value="ECO:0000314"/>
    <property type="project" value="UniProtKB"/>
</dbReference>
<dbReference type="GO" id="GO:0030904">
    <property type="term" value="C:retromer complex"/>
    <property type="evidence" value="ECO:0000314"/>
    <property type="project" value="UniProtKB"/>
</dbReference>
<dbReference type="GO" id="GO:0030905">
    <property type="term" value="C:retromer, tubulation complex"/>
    <property type="evidence" value="ECO:0000353"/>
    <property type="project" value="ParkinsonsUK-UCL"/>
</dbReference>
<dbReference type="GO" id="GO:0031982">
    <property type="term" value="C:vesicle"/>
    <property type="evidence" value="ECO:0000314"/>
    <property type="project" value="BHF-UCL"/>
</dbReference>
<dbReference type="GO" id="GO:0045296">
    <property type="term" value="F:cadherin binding"/>
    <property type="evidence" value="ECO:0007005"/>
    <property type="project" value="BHF-UCL"/>
</dbReference>
<dbReference type="GO" id="GO:0005154">
    <property type="term" value="F:epidermal growth factor receptor binding"/>
    <property type="evidence" value="ECO:0000314"/>
    <property type="project" value="UniProtKB"/>
</dbReference>
<dbReference type="GO" id="GO:0042802">
    <property type="term" value="F:identical protein binding"/>
    <property type="evidence" value="ECO:0000353"/>
    <property type="project" value="IntAct"/>
</dbReference>
<dbReference type="GO" id="GO:0005158">
    <property type="term" value="F:insulin receptor binding"/>
    <property type="evidence" value="ECO:0000314"/>
    <property type="project" value="UniProtKB"/>
</dbReference>
<dbReference type="GO" id="GO:1990460">
    <property type="term" value="F:leptin receptor binding"/>
    <property type="evidence" value="ECO:0000314"/>
    <property type="project" value="UniProtKB"/>
</dbReference>
<dbReference type="GO" id="GO:0035091">
    <property type="term" value="F:phosphatidylinositol binding"/>
    <property type="evidence" value="ECO:0000314"/>
    <property type="project" value="UniProtKB"/>
</dbReference>
<dbReference type="GO" id="GO:0046982">
    <property type="term" value="F:protein heterodimerization activity"/>
    <property type="evidence" value="ECO:0000353"/>
    <property type="project" value="ParkinsonsUK-UCL"/>
</dbReference>
<dbReference type="GO" id="GO:0042803">
    <property type="term" value="F:protein homodimerization activity"/>
    <property type="evidence" value="ECO:0000353"/>
    <property type="project" value="ParkinsonsUK-UCL"/>
</dbReference>
<dbReference type="GO" id="GO:1990459">
    <property type="term" value="F:transferrin receptor binding"/>
    <property type="evidence" value="ECO:0000314"/>
    <property type="project" value="UniProtKB"/>
</dbReference>
<dbReference type="GO" id="GO:0034498">
    <property type="term" value="P:early endosome to Golgi transport"/>
    <property type="evidence" value="ECO:0000315"/>
    <property type="project" value="UniProtKB"/>
</dbReference>
<dbReference type="GO" id="GO:0006886">
    <property type="term" value="P:intracellular protein transport"/>
    <property type="evidence" value="ECO:0000315"/>
    <property type="project" value="UniProtKB"/>
</dbReference>
<dbReference type="GO" id="GO:0072673">
    <property type="term" value="P:lamellipodium morphogenesis"/>
    <property type="evidence" value="ECO:0000314"/>
    <property type="project" value="UniProtKB"/>
</dbReference>
<dbReference type="GO" id="GO:0045732">
    <property type="term" value="P:positive regulation of protein catabolic process"/>
    <property type="evidence" value="ECO:0007669"/>
    <property type="project" value="Ensembl"/>
</dbReference>
<dbReference type="GO" id="GO:0031623">
    <property type="term" value="P:receptor internalization"/>
    <property type="evidence" value="ECO:0000315"/>
    <property type="project" value="UniProtKB"/>
</dbReference>
<dbReference type="GO" id="GO:0042147">
    <property type="term" value="P:retrograde transport, endosome to Golgi"/>
    <property type="evidence" value="ECO:0000315"/>
    <property type="project" value="UniProtKB"/>
</dbReference>
<dbReference type="CDD" id="cd07665">
    <property type="entry name" value="BAR_SNX1"/>
    <property type="match status" value="1"/>
</dbReference>
<dbReference type="CDD" id="cd07281">
    <property type="entry name" value="PX_SNX1"/>
    <property type="match status" value="1"/>
</dbReference>
<dbReference type="FunFam" id="3.30.1520.10:FF:000015">
    <property type="entry name" value="Sorting nexin 1"/>
    <property type="match status" value="1"/>
</dbReference>
<dbReference type="FunFam" id="1.20.1270.60:FF:000012">
    <property type="entry name" value="Sorting nexin 2"/>
    <property type="match status" value="1"/>
</dbReference>
<dbReference type="Gene3D" id="1.20.1270.60">
    <property type="entry name" value="Arfaptin homology (AH) domain/BAR domain"/>
    <property type="match status" value="1"/>
</dbReference>
<dbReference type="Gene3D" id="3.30.1520.10">
    <property type="entry name" value="Phox-like domain"/>
    <property type="match status" value="1"/>
</dbReference>
<dbReference type="InterPro" id="IPR027267">
    <property type="entry name" value="AH/BAR_dom_sf"/>
</dbReference>
<dbReference type="InterPro" id="IPR001683">
    <property type="entry name" value="PX_dom"/>
</dbReference>
<dbReference type="InterPro" id="IPR036871">
    <property type="entry name" value="PX_dom_sf"/>
</dbReference>
<dbReference type="InterPro" id="IPR034901">
    <property type="entry name" value="PX_SNX1"/>
</dbReference>
<dbReference type="InterPro" id="IPR028660">
    <property type="entry name" value="SNX1_BAR"/>
</dbReference>
<dbReference type="InterPro" id="IPR005329">
    <property type="entry name" value="Sorting_nexin_N"/>
</dbReference>
<dbReference type="InterPro" id="IPR015404">
    <property type="entry name" value="Vps5_C"/>
</dbReference>
<dbReference type="PANTHER" id="PTHR10555">
    <property type="entry name" value="SORTING NEXIN"/>
    <property type="match status" value="1"/>
</dbReference>
<dbReference type="PANTHER" id="PTHR10555:SF129">
    <property type="entry name" value="SORTING NEXIN-1"/>
    <property type="match status" value="1"/>
</dbReference>
<dbReference type="Pfam" id="PF00787">
    <property type="entry name" value="PX"/>
    <property type="match status" value="1"/>
</dbReference>
<dbReference type="Pfam" id="PF03700">
    <property type="entry name" value="Sorting_nexin"/>
    <property type="match status" value="1"/>
</dbReference>
<dbReference type="Pfam" id="PF09325">
    <property type="entry name" value="Vps5"/>
    <property type="match status" value="1"/>
</dbReference>
<dbReference type="SMART" id="SM00312">
    <property type="entry name" value="PX"/>
    <property type="match status" value="1"/>
</dbReference>
<dbReference type="SUPFAM" id="SSF103657">
    <property type="entry name" value="BAR/IMD domain-like"/>
    <property type="match status" value="1"/>
</dbReference>
<dbReference type="SUPFAM" id="SSF64268">
    <property type="entry name" value="PX domain"/>
    <property type="match status" value="1"/>
</dbReference>
<dbReference type="PROSITE" id="PS50195">
    <property type="entry name" value="PX"/>
    <property type="match status" value="1"/>
</dbReference>
<name>SNX1_HUMAN</name>
<evidence type="ECO:0000250" key="1">
    <source>
        <dbReference type="UniProtKB" id="Q96L94"/>
    </source>
</evidence>
<evidence type="ECO:0000250" key="2">
    <source>
        <dbReference type="UniProtKB" id="Q99N27"/>
    </source>
</evidence>
<evidence type="ECO:0000250" key="3">
    <source>
        <dbReference type="UniProtKB" id="Q9WV80"/>
    </source>
</evidence>
<evidence type="ECO:0000255" key="4">
    <source>
        <dbReference type="PROSITE-ProRule" id="PRU00147"/>
    </source>
</evidence>
<evidence type="ECO:0000256" key="5">
    <source>
        <dbReference type="SAM" id="MobiDB-lite"/>
    </source>
</evidence>
<evidence type="ECO:0000269" key="6">
    <source>
    </source>
</evidence>
<evidence type="ECO:0000269" key="7">
    <source>
    </source>
</evidence>
<evidence type="ECO:0000269" key="8">
    <source>
    </source>
</evidence>
<evidence type="ECO:0000269" key="9">
    <source>
    </source>
</evidence>
<evidence type="ECO:0000269" key="10">
    <source>
    </source>
</evidence>
<evidence type="ECO:0000269" key="11">
    <source>
    </source>
</evidence>
<evidence type="ECO:0000269" key="12">
    <source>
    </source>
</evidence>
<evidence type="ECO:0000269" key="13">
    <source>
    </source>
</evidence>
<evidence type="ECO:0000269" key="14">
    <source>
    </source>
</evidence>
<evidence type="ECO:0000269" key="15">
    <source>
    </source>
</evidence>
<evidence type="ECO:0000269" key="16">
    <source>
    </source>
</evidence>
<evidence type="ECO:0000269" key="17">
    <source>
    </source>
</evidence>
<evidence type="ECO:0000269" key="18">
    <source>
    </source>
</evidence>
<evidence type="ECO:0000269" key="19">
    <source>
    </source>
</evidence>
<evidence type="ECO:0000269" key="20">
    <source>
    </source>
</evidence>
<evidence type="ECO:0000269" key="21">
    <source>
    </source>
</evidence>
<evidence type="ECO:0000269" key="22">
    <source>
    </source>
</evidence>
<evidence type="ECO:0000269" key="23">
    <source>
    </source>
</evidence>
<evidence type="ECO:0000269" key="24">
    <source>
    </source>
</evidence>
<evidence type="ECO:0000303" key="25">
    <source>
    </source>
</evidence>
<evidence type="ECO:0000303" key="26">
    <source>
    </source>
</evidence>
<evidence type="ECO:0000303" key="27">
    <source>
    </source>
</evidence>
<evidence type="ECO:0000303" key="28">
    <source>
    </source>
</evidence>
<evidence type="ECO:0000303" key="29">
    <source>
    </source>
</evidence>
<evidence type="ECO:0000305" key="30"/>
<evidence type="ECO:0007744" key="31">
    <source>
    </source>
</evidence>
<evidence type="ECO:0007744" key="32">
    <source>
    </source>
</evidence>
<evidence type="ECO:0007744" key="33">
    <source>
    </source>
</evidence>
<evidence type="ECO:0007744" key="34">
    <source>
    </source>
</evidence>
<evidence type="ECO:0007744" key="35">
    <source>
    </source>
</evidence>
<evidence type="ECO:0007744" key="36">
    <source>
    </source>
</evidence>
<evidence type="ECO:0007829" key="37">
    <source>
        <dbReference type="PDB" id="2I4K"/>
    </source>
</evidence>
<evidence type="ECO:0007829" key="38">
    <source>
        <dbReference type="PDB" id="8A1G"/>
    </source>
</evidence>
<keyword id="KW-0002">3D-structure</keyword>
<keyword id="KW-0007">Acetylation</keyword>
<keyword id="KW-0025">Alternative splicing</keyword>
<keyword id="KW-0966">Cell projection</keyword>
<keyword id="KW-0967">Endosome</keyword>
<keyword id="KW-0333">Golgi apparatus</keyword>
<keyword id="KW-0446">Lipid-binding</keyword>
<keyword id="KW-0472">Membrane</keyword>
<keyword id="KW-0597">Phosphoprotein</keyword>
<keyword id="KW-0653">Protein transport</keyword>
<keyword id="KW-1267">Proteomics identification</keyword>
<keyword id="KW-1185">Reference proteome</keyword>
<keyword id="KW-0813">Transport</keyword>